<feature type="chain" id="PRO_5007956284" description="Cytochrome P450 monooxygenase patH">
    <location>
        <begin position="1"/>
        <end position="524"/>
    </location>
</feature>
<feature type="topological domain" description="Cytoplasmic" evidence="13">
    <location>
        <begin position="1"/>
        <end position="4"/>
    </location>
</feature>
<feature type="transmembrane region" description="Helical" evidence="2">
    <location>
        <begin position="5"/>
        <end position="22"/>
    </location>
</feature>
<feature type="topological domain" description="Lumenal" evidence="13">
    <location>
        <begin position="23"/>
        <end position="524"/>
    </location>
</feature>
<feature type="binding site" description="axial binding residue" evidence="1">
    <location>
        <position position="442"/>
    </location>
    <ligand>
        <name>heme</name>
        <dbReference type="ChEBI" id="CHEBI:30413"/>
    </ligand>
    <ligandPart>
        <name>Fe</name>
        <dbReference type="ChEBI" id="CHEBI:18248"/>
    </ligandPart>
</feature>
<feature type="glycosylation site" description="N-linked (GlcNAc...) asparagine" evidence="3">
    <location>
        <position position="266"/>
    </location>
</feature>
<comment type="function">
    <text evidence="7 10 11 14">Cytochrome P450 monooxygenase; part of the gene cluster that mediates the biosynthesis of patulin, an acetate-derived tetraketide mycotoxin produced by several fungal species that shows antimicrobial properties against several bacteria (PubMed:25625822, PubMed:30100914, PubMed:30680886). PatH catalyzes the conversion of m-cresol into m-hydroxybenzyl alcohol (PubMed:30680886). The pathway begins with the synthesis of 6-methylsalicylic acid by the polyketide synthase (PKS) patK via condensation of acetate and malonate units. The 6-methylsalicylic acid decarboxylase patG then catalyzes the decarboxylation of 6-methylsalicylic acid to yield m-cresol (also known as 3-methylphenol). These first reactions occur in the cytosol. The intermediate m-cresol is then transported into the endoplasmic reticulum where the cytochrome P450 monooxygenase patH converts it to m-hydroxybenzyl alcohol, which is further converted to gentisyl alcohol by the cytochrome P450 monooxygenase patI. The oxidoreductases patJ and patO further convert gentisyl alcohol to isoepoxydon in the vacuole. PatN catalyzes then the transformation of isoepoxydon into phyllostine. The cluster protein patF is responsible for the conversion from phyllostine to neopatulin whereas the alcohol dehydrogenase patD converts neopatulin to E-ascladiol. The steps between isoepoxydon and E-ascladiol occur in the cytosol, and E-ascladiol is probably secreted to the extracellular space by one of the cluster-specific transporters patC or patM. Finally, the secreted patulin synthase patE catalyzes the conversion of E-ascladiol to patulin (Probable) (PubMed:30680886).</text>
</comment>
<comment type="catalytic activity">
    <reaction evidence="11">
        <text>3-methylphenol + reduced [NADPH--hemoprotein reductase] + O2 = 3-hydroxybenzyl alcohol + oxidized [NADPH--hemoprotein reductase] + H2O + H(+)</text>
        <dbReference type="Rhea" id="RHEA:62208"/>
        <dbReference type="Rhea" id="RHEA-COMP:11964"/>
        <dbReference type="Rhea" id="RHEA-COMP:11965"/>
        <dbReference type="ChEBI" id="CHEBI:15377"/>
        <dbReference type="ChEBI" id="CHEBI:15378"/>
        <dbReference type="ChEBI" id="CHEBI:15379"/>
        <dbReference type="ChEBI" id="CHEBI:17069"/>
        <dbReference type="ChEBI" id="CHEBI:17231"/>
        <dbReference type="ChEBI" id="CHEBI:57618"/>
        <dbReference type="ChEBI" id="CHEBI:58210"/>
    </reaction>
    <physiologicalReaction direction="left-to-right" evidence="11">
        <dbReference type="Rhea" id="RHEA:62209"/>
    </physiologicalReaction>
</comment>
<comment type="cofactor">
    <cofactor evidence="1">
        <name>heme</name>
        <dbReference type="ChEBI" id="CHEBI:30413"/>
    </cofactor>
</comment>
<comment type="pathway">
    <text evidence="11">Mycotoxin biosynthesis; patulin biosynthesis.</text>
</comment>
<comment type="subcellular location">
    <subcellularLocation>
        <location evidence="11">Endoplasmic reticulum membrane</location>
        <topology evidence="11">Single-pass membrane protein</topology>
    </subcellularLocation>
</comment>
<comment type="induction">
    <text evidence="6 7 9 10 11">Expression is correlated with the production of patulin (PubMed:25120234). Expression is positively regulated by the secondary metabolism regulator laeA (PubMed:27528575, PubMed:30100914). Expression is strongly decreased with increased sucrose concentrations. This decrease is lost in the presence of malic acid (PubMed:30100914). Expression is increased with pH changes from 2.5 to 3.5 in the presence of a limiting concentration of sucrose, 50 mM (PubMed:30100914). Natural phenols present in apple fruits such as chlorogenic acid or the flavonoid epicatechin modulate patulin biosynthesis. They increase expression in the absence of sucrose, have little impact in the presence of 15 mM sucrose, and decrease expression in 175 mM sucrose (PubMed:30100914). Expression is positively regulated by the patulin cluster-specific transcription factor patL (PubMed:25625822). Finally, expression is also positively regulated by the velvet family proteins transcription regulators veA, velB, velC, but not vosA (PubMed:30680886).</text>
</comment>
<comment type="disruption phenotype">
    <text evidence="11">Completely abolishes the production of patulin and leads to the production of a distinct dark-red pigment.</text>
</comment>
<comment type="biotechnology">
    <text evidence="4 5 8">Patulin was originally used as an antibiotic and specifically trialed to be used against the common cold, but it is no longer used for that purpose since it has been shown to induce immunological, neurological and gastrointestinal effects (PubMed:15082620). Genotoxic effects of patulin with dose-dependent increase in DNA strand breaks in brain, liver and kidneys have been detected in mice (PubMed:22222931). However, more recently, it has been proposed that patulin might also have anti-tumor properties (PubMed:26619846).</text>
</comment>
<comment type="similarity">
    <text evidence="13">Belongs to the cytochrome P450 family.</text>
</comment>
<dbReference type="EC" id="1.-.-.-" evidence="11"/>
<dbReference type="EMBL" id="KF899892">
    <property type="protein sequence ID" value="AIG62144.1"/>
    <property type="molecule type" value="Genomic_DNA"/>
</dbReference>
<dbReference type="EMBL" id="JQFZ01000262">
    <property type="protein sequence ID" value="KGO52627.1"/>
    <property type="molecule type" value="Genomic_DNA"/>
</dbReference>
<dbReference type="RefSeq" id="XP_016595357.1">
    <property type="nucleotide sequence ID" value="XM_016745544.1"/>
</dbReference>
<dbReference type="SMR" id="A0A075TRL5"/>
<dbReference type="STRING" id="27334.A0A075TRL5"/>
<dbReference type="GlyCosmos" id="A0A075TRL5">
    <property type="glycosylation" value="1 site, No reported glycans"/>
</dbReference>
<dbReference type="GeneID" id="27680964"/>
<dbReference type="VEuPathDB" id="FungiDB:PEXP_094320"/>
<dbReference type="HOGENOM" id="CLU_001570_2_1_1"/>
<dbReference type="OrthoDB" id="1103324at2759"/>
<dbReference type="PhylomeDB" id="A0A075TRL5"/>
<dbReference type="UniPathway" id="UPA00918"/>
<dbReference type="Proteomes" id="UP000030143">
    <property type="component" value="Unassembled WGS sequence"/>
</dbReference>
<dbReference type="GO" id="GO:0005783">
    <property type="term" value="C:endoplasmic reticulum"/>
    <property type="evidence" value="ECO:0000314"/>
    <property type="project" value="GO_Central"/>
</dbReference>
<dbReference type="GO" id="GO:0005789">
    <property type="term" value="C:endoplasmic reticulum membrane"/>
    <property type="evidence" value="ECO:0007669"/>
    <property type="project" value="UniProtKB-SubCell"/>
</dbReference>
<dbReference type="GO" id="GO:0020037">
    <property type="term" value="F:heme binding"/>
    <property type="evidence" value="ECO:0007669"/>
    <property type="project" value="InterPro"/>
</dbReference>
<dbReference type="GO" id="GO:0005506">
    <property type="term" value="F:iron ion binding"/>
    <property type="evidence" value="ECO:0007669"/>
    <property type="project" value="InterPro"/>
</dbReference>
<dbReference type="GO" id="GO:0004497">
    <property type="term" value="F:monooxygenase activity"/>
    <property type="evidence" value="ECO:0000314"/>
    <property type="project" value="GO_Central"/>
</dbReference>
<dbReference type="GO" id="GO:0016705">
    <property type="term" value="F:oxidoreductase activity, acting on paired donors, with incorporation or reduction of molecular oxygen"/>
    <property type="evidence" value="ECO:0007669"/>
    <property type="project" value="InterPro"/>
</dbReference>
<dbReference type="GO" id="GO:0016218">
    <property type="term" value="F:polyketide synthase activity"/>
    <property type="evidence" value="ECO:0000314"/>
    <property type="project" value="UniProt"/>
</dbReference>
<dbReference type="GO" id="GO:0140723">
    <property type="term" value="P:patulin biosynthetic process"/>
    <property type="evidence" value="ECO:0000314"/>
    <property type="project" value="GO_Central"/>
</dbReference>
<dbReference type="CDD" id="cd11065">
    <property type="entry name" value="CYP64-like"/>
    <property type="match status" value="1"/>
</dbReference>
<dbReference type="Gene3D" id="1.10.630.10">
    <property type="entry name" value="Cytochrome P450"/>
    <property type="match status" value="1"/>
</dbReference>
<dbReference type="InterPro" id="IPR001128">
    <property type="entry name" value="Cyt_P450"/>
</dbReference>
<dbReference type="InterPro" id="IPR002401">
    <property type="entry name" value="Cyt_P450_E_grp-I"/>
</dbReference>
<dbReference type="InterPro" id="IPR036396">
    <property type="entry name" value="Cyt_P450_sf"/>
</dbReference>
<dbReference type="InterPro" id="IPR050364">
    <property type="entry name" value="Cytochrome_P450_fung"/>
</dbReference>
<dbReference type="PANTHER" id="PTHR46300:SF2">
    <property type="entry name" value="CYTOCHROME P450 MONOOXYGENASE ALNH-RELATED"/>
    <property type="match status" value="1"/>
</dbReference>
<dbReference type="PANTHER" id="PTHR46300">
    <property type="entry name" value="P450, PUTATIVE (EUROFUNG)-RELATED-RELATED"/>
    <property type="match status" value="1"/>
</dbReference>
<dbReference type="Pfam" id="PF00067">
    <property type="entry name" value="p450"/>
    <property type="match status" value="1"/>
</dbReference>
<dbReference type="PRINTS" id="PR00463">
    <property type="entry name" value="EP450I"/>
</dbReference>
<dbReference type="SUPFAM" id="SSF48264">
    <property type="entry name" value="Cytochrome P450"/>
    <property type="match status" value="1"/>
</dbReference>
<gene>
    <name evidence="12" type="primary">patH</name>
    <name type="ORF">PEX2_082740</name>
</gene>
<evidence type="ECO:0000250" key="1">
    <source>
        <dbReference type="UniProtKB" id="P04798"/>
    </source>
</evidence>
<evidence type="ECO:0000255" key="2"/>
<evidence type="ECO:0000255" key="3">
    <source>
        <dbReference type="PROSITE-ProRule" id="PRU00498"/>
    </source>
</evidence>
<evidence type="ECO:0000269" key="4">
    <source>
    </source>
</evidence>
<evidence type="ECO:0000269" key="5">
    <source>
    </source>
</evidence>
<evidence type="ECO:0000269" key="6">
    <source>
    </source>
</evidence>
<evidence type="ECO:0000269" key="7">
    <source>
    </source>
</evidence>
<evidence type="ECO:0000269" key="8">
    <source>
    </source>
</evidence>
<evidence type="ECO:0000269" key="9">
    <source>
    </source>
</evidence>
<evidence type="ECO:0000269" key="10">
    <source>
    </source>
</evidence>
<evidence type="ECO:0000269" key="11">
    <source>
    </source>
</evidence>
<evidence type="ECO:0000303" key="12">
    <source>
    </source>
</evidence>
<evidence type="ECO:0000305" key="13"/>
<evidence type="ECO:0000305" key="14">
    <source>
    </source>
</evidence>
<accession>A0A075TRL5</accession>
<protein>
    <recommendedName>
        <fullName evidence="12">Cytochrome P450 monooxygenase patH</fullName>
        <ecNumber evidence="11">1.-.-.-</ecNumber>
    </recommendedName>
    <alternativeName>
        <fullName evidence="12">Patulin biosynthesis cluster protein H</fullName>
    </alternativeName>
    <alternativeName>
        <fullName evidence="12">m-cresol hydrolase</fullName>
    </alternativeName>
</protein>
<organism>
    <name type="scientific">Penicillium expansum</name>
    <name type="common">Blue mold rot fungus</name>
    <dbReference type="NCBI Taxonomy" id="27334"/>
    <lineage>
        <taxon>Eukaryota</taxon>
        <taxon>Fungi</taxon>
        <taxon>Dikarya</taxon>
        <taxon>Ascomycota</taxon>
        <taxon>Pezizomycotina</taxon>
        <taxon>Eurotiomycetes</taxon>
        <taxon>Eurotiomycetidae</taxon>
        <taxon>Eurotiales</taxon>
        <taxon>Aspergillaceae</taxon>
        <taxon>Penicillium</taxon>
    </lineage>
</organism>
<name>PATH_PENEN</name>
<proteinExistence type="evidence at protein level"/>
<sequence length="524" mass="60202">MEPFLLLLLVLLPAIVLVRYAFTYGHRTSTMPIGPPTLPFIGNIHQITKKYTHIKFTEWAAQYGGLYMLKIGNGNMAVITDRRLVKEVLDRKSGIYSHRPHSFVSHDLITKGNHLLVMHYGDQWRTFRRLVHQHLMETMVENHHTKIVNAEAIQLVRDYMIDPEHHMAHPKRYSNSITNSIVFGIRTANREGANMRRLYKLMEEWSEVMETGATPPVDLFPWLKLLPQWLFNNYIDRAKAIGVQMETLYVDILNKVIKRREDGHNNGTFMDKVLDSQEKHNLPWHQLAFIGGVLMEGGSDTSSSLTLAIVQALIQNPDVQRKAHAEIDAVVGHNRSPVWEDFEKLPYINMIIKEGHRWRPILPLCFPHALGEDDWVDGKFLPKGTIVVVNTWGMHMDPSQPDDPAAFIPERFAKHPQLAPDYVPGTWERRDHYGYGVGRRICPGIHLAERNMFLGIAKLLWAFDFQPGEGPIDSDPVTGYHNGFLYCAKDYSCRPVIRNEVIRDTIEREYATATADVFSRFTEG</sequence>
<keyword id="KW-0256">Endoplasmic reticulum</keyword>
<keyword id="KW-0325">Glycoprotein</keyword>
<keyword id="KW-0408">Iron</keyword>
<keyword id="KW-0472">Membrane</keyword>
<keyword id="KW-0479">Metal-binding</keyword>
<keyword id="KW-0503">Monooxygenase</keyword>
<keyword id="KW-0560">Oxidoreductase</keyword>
<keyword id="KW-1185">Reference proteome</keyword>
<keyword id="KW-0812">Transmembrane</keyword>
<keyword id="KW-1133">Transmembrane helix</keyword>
<reference key="1">
    <citation type="journal article" date="2014" name="Int. J. Food Microbiol.">
        <title>Sequencing, physical organization and kinetic expression of the patulin biosynthetic gene cluster from Penicillium expansum.</title>
        <authorList>
            <person name="Tannous J."/>
            <person name="El Khoury R."/>
            <person name="Snini S.P."/>
            <person name="Lippi Y."/>
            <person name="El Khoury A."/>
            <person name="Atoui A."/>
            <person name="Lteif R."/>
            <person name="Oswald I.P."/>
            <person name="Puel O."/>
        </authorList>
    </citation>
    <scope>NUCLEOTIDE SEQUENCE [GENOMIC DNA]</scope>
    <scope>IDENTIFICATION</scope>
    <scope>INDUCTION</scope>
    <source>
        <strain>NRRL 35695</strain>
    </source>
</reference>
<reference key="2">
    <citation type="journal article" date="2015" name="Mol. Plant Microbe Interact.">
        <title>Genome, transcriptome, and functional analyses of Penicillium expansum provide new insights into secondary metabolism and pathogenicity.</title>
        <authorList>
            <person name="Ballester A.R."/>
            <person name="Marcet-Houben M."/>
            <person name="Levin E."/>
            <person name="Sela N."/>
            <person name="Selma-Lazaro C."/>
            <person name="Carmona L."/>
            <person name="Wisniewski M."/>
            <person name="Droby S."/>
            <person name="Gonzalez-Candelas L."/>
            <person name="Gabaldon T."/>
        </authorList>
    </citation>
    <scope>NUCLEOTIDE SEQUENCE [LARGE SCALE GENOMIC DNA]</scope>
    <source>
        <strain>MD-8</strain>
    </source>
</reference>
<reference key="3">
    <citation type="journal article" date="2004" name="Int. J. Epidemiol.">
        <title>Clinical trial of patulin in the common cold. 1944.</title>
        <authorList>
            <consortium name="Patulin Clinical Trials Committee, Medical Research Council"/>
        </authorList>
    </citation>
    <scope>BIOTECHNOLOGY</scope>
</reference>
<reference key="4">
    <citation type="journal article" date="2012" name="Food Chem. Toxicol.">
        <title>DNA damage in organs of mice treated acutely with patulin, a known mycotoxin.</title>
        <authorList>
            <person name="de Melo F.T."/>
            <person name="de Oliveira I.M."/>
            <person name="Greggio S."/>
            <person name="Dacosta J.C."/>
            <person name="Guecheva T.N."/>
            <person name="Saffi J."/>
            <person name="Henriques J.A."/>
            <person name="Rosa R.M."/>
        </authorList>
    </citation>
    <scope>BIOTECHNOLOGY</scope>
</reference>
<reference key="5">
    <citation type="journal article" date="2016" name="Tumor Biol.">
        <title>The potential effect of patulin on mice bearing melanoma cells: an anti-tumour or carcinogenic effect?</title>
        <authorList>
            <person name="Boussabbeh M."/>
            <person name="Ben Salem I."/>
            <person name="Rjiba-Touati K."/>
            <person name="Bouyahya C."/>
            <person name="Neffati F."/>
            <person name="Najjar M.F."/>
            <person name="Bacha H."/>
            <person name="Abid-Essefi S."/>
        </authorList>
    </citation>
    <scope>BIOTECHNOLOGY</scope>
</reference>
<reference key="6">
    <citation type="journal article" date="2017" name="Mol. Plant Pathol.">
        <title>LaeA regulation of secondary metabolism modulates virulence in Penicillium expansum and is mediated by sucrose.</title>
        <authorList>
            <person name="Kumar D."/>
            <person name="Barad S."/>
            <person name="Chen Y."/>
            <person name="Luo X."/>
            <person name="Tannous J."/>
            <person name="Dubey A."/>
            <person name="Glam Matana N."/>
            <person name="Tian S."/>
            <person name="Li B."/>
            <person name="Keller N."/>
            <person name="Prusky D."/>
        </authorList>
    </citation>
    <scope>INDUCTION</scope>
</reference>
<reference key="7">
    <citation type="journal article" date="2018" name="Front. Plant Sci.">
        <title>Apple intrinsic factors modulating the global regulator, LaeA, the patulin gene cluster and patulin accumulation during fruit colonization by Penicillium expansum.</title>
        <authorList>
            <person name="Kumar D."/>
            <person name="Tannous J."/>
            <person name="Sionov E."/>
            <person name="Keller N."/>
            <person name="Prusky D."/>
        </authorList>
    </citation>
    <scope>FUNCTION</scope>
    <scope>INDUCTION</scope>
</reference>
<reference key="8">
    <citation type="journal article" date="2015" name="Mol. Plant Microbe Interact.">
        <title>Genomic characterization reveals insights into patulin biosynthesis and pathogenicity in Penicillium species.</title>
        <authorList>
            <person name="Li B."/>
            <person name="Zong Y."/>
            <person name="Du Z."/>
            <person name="Chen Y."/>
            <person name="Zhang Z."/>
            <person name="Qin G."/>
            <person name="Zhao W."/>
            <person name="Tian S."/>
        </authorList>
    </citation>
    <scope>FUNCTION</scope>
    <scope>INDUCTION</scope>
</reference>
<reference key="9">
    <citation type="journal article" date="2019" name="Environ. Microbiol.">
        <title>Dissection of patulin biosynthesis, spatial control and regulation mechanism in Penicillium expansum.</title>
        <authorList>
            <person name="Li B."/>
            <person name="Chen Y."/>
            <person name="Zong Y."/>
            <person name="Shang Y."/>
            <person name="Zhang Z."/>
            <person name="Xu X."/>
            <person name="Wang X."/>
            <person name="Long M."/>
            <person name="Tian S."/>
        </authorList>
    </citation>
    <scope>FUNCTION</scope>
    <scope>DISRUPTION PHENOTYPE</scope>
    <scope>SUBCELLULAR LOCATION</scope>
    <scope>CATALYTIC ACTIVITY</scope>
    <scope>INDUCTION</scope>
    <scope>PATHWAY</scope>
</reference>